<name>RF1_RICAH</name>
<reference key="1">
    <citation type="submission" date="2007-09" db="EMBL/GenBank/DDBJ databases">
        <title>Complete genome sequence of Rickettsia akari.</title>
        <authorList>
            <person name="Madan A."/>
            <person name="Fahey J."/>
            <person name="Helton E."/>
            <person name="Ketteman M."/>
            <person name="Madan A."/>
            <person name="Rodrigues S."/>
            <person name="Sanchez A."/>
            <person name="Whiting M."/>
            <person name="Dasch G."/>
            <person name="Eremeeva M."/>
        </authorList>
    </citation>
    <scope>NUCLEOTIDE SEQUENCE [LARGE SCALE GENOMIC DNA]</scope>
    <source>
        <strain>Hartford</strain>
    </source>
</reference>
<keyword id="KW-0963">Cytoplasm</keyword>
<keyword id="KW-0488">Methylation</keyword>
<keyword id="KW-0648">Protein biosynthesis</keyword>
<comment type="function">
    <text evidence="1">Peptide chain release factor 1 directs the termination of translation in response to the peptide chain termination codons UAG and UAA.</text>
</comment>
<comment type="subcellular location">
    <subcellularLocation>
        <location evidence="1">Cytoplasm</location>
    </subcellularLocation>
</comment>
<comment type="PTM">
    <text evidence="1">Methylated by PrmC. Methylation increases the termination efficiency of RF1.</text>
</comment>
<comment type="similarity">
    <text evidence="1">Belongs to the prokaryotic/mitochondrial release factor family.</text>
</comment>
<evidence type="ECO:0000255" key="1">
    <source>
        <dbReference type="HAMAP-Rule" id="MF_00093"/>
    </source>
</evidence>
<evidence type="ECO:0000256" key="2">
    <source>
        <dbReference type="SAM" id="MobiDB-lite"/>
    </source>
</evidence>
<organism>
    <name type="scientific">Rickettsia akari (strain Hartford)</name>
    <dbReference type="NCBI Taxonomy" id="293614"/>
    <lineage>
        <taxon>Bacteria</taxon>
        <taxon>Pseudomonadati</taxon>
        <taxon>Pseudomonadota</taxon>
        <taxon>Alphaproteobacteria</taxon>
        <taxon>Rickettsiales</taxon>
        <taxon>Rickettsiaceae</taxon>
        <taxon>Rickettsieae</taxon>
        <taxon>Rickettsia</taxon>
        <taxon>spotted fever group</taxon>
    </lineage>
</organism>
<protein>
    <recommendedName>
        <fullName evidence="1">Peptide chain release factor 1</fullName>
        <shortName evidence="1">RF-1</shortName>
    </recommendedName>
</protein>
<sequence>MSFSDNLAKILDKYDNLGKKLSSGIMGDEFVKASKEYAELEDVVVKIKEYNKAKSELEEANNFKLELGFDNATLAMIEDEIHILENSLPKLERAVKIALLPKDDADSKSAIIEVRAGSGGEEAALFAAVLFNMYQRYAELKGWRFEILAISDTGIGGYKEASASIKGKDVFSKLKFESGVHRVQRVPETESQGRIHTSAATVAVLPEAEEVDIKIEDKDLRIDTYRASGAGGQHVNTTDSAVRITHIPTGITVALQDEKSQHKNKAKALKILRARIYEEERRNKEQERADSRRGQIGSGDRSERIRTYNFPQGRVSDHRINLTLYKIDEVVKNGQLDEFIEALIAEDEAKKLSEI</sequence>
<gene>
    <name evidence="1" type="primary">prfA</name>
    <name type="ordered locus">A1C_03760</name>
</gene>
<accession>A8GNQ4</accession>
<feature type="chain" id="PRO_1000004941" description="Peptide chain release factor 1">
    <location>
        <begin position="1"/>
        <end position="355"/>
    </location>
</feature>
<feature type="region of interest" description="Disordered" evidence="2">
    <location>
        <begin position="281"/>
        <end position="308"/>
    </location>
</feature>
<feature type="compositionally biased region" description="Basic and acidic residues" evidence="2">
    <location>
        <begin position="281"/>
        <end position="293"/>
    </location>
</feature>
<feature type="modified residue" description="N5-methylglutamine" evidence="1">
    <location>
        <position position="233"/>
    </location>
</feature>
<proteinExistence type="inferred from homology"/>
<dbReference type="EMBL" id="CP000847">
    <property type="protein sequence ID" value="ABV75029.1"/>
    <property type="molecule type" value="Genomic_DNA"/>
</dbReference>
<dbReference type="RefSeq" id="WP_012149660.1">
    <property type="nucleotide sequence ID" value="NC_009881.1"/>
</dbReference>
<dbReference type="SMR" id="A8GNQ4"/>
<dbReference type="STRING" id="293614.A1C_03760"/>
<dbReference type="KEGG" id="rak:A1C_03760"/>
<dbReference type="eggNOG" id="COG0216">
    <property type="taxonomic scope" value="Bacteria"/>
</dbReference>
<dbReference type="HOGENOM" id="CLU_036856_0_1_5"/>
<dbReference type="Proteomes" id="UP000006830">
    <property type="component" value="Chromosome"/>
</dbReference>
<dbReference type="GO" id="GO:0005737">
    <property type="term" value="C:cytoplasm"/>
    <property type="evidence" value="ECO:0007669"/>
    <property type="project" value="UniProtKB-SubCell"/>
</dbReference>
<dbReference type="GO" id="GO:0016149">
    <property type="term" value="F:translation release factor activity, codon specific"/>
    <property type="evidence" value="ECO:0007669"/>
    <property type="project" value="UniProtKB-UniRule"/>
</dbReference>
<dbReference type="FunFam" id="3.30.160.20:FF:000004">
    <property type="entry name" value="Peptide chain release factor 1"/>
    <property type="match status" value="1"/>
</dbReference>
<dbReference type="FunFam" id="3.30.70.1660:FF:000002">
    <property type="entry name" value="Peptide chain release factor 1"/>
    <property type="match status" value="1"/>
</dbReference>
<dbReference type="FunFam" id="3.30.70.1660:FF:000004">
    <property type="entry name" value="Peptide chain release factor 1"/>
    <property type="match status" value="1"/>
</dbReference>
<dbReference type="Gene3D" id="3.30.160.20">
    <property type="match status" value="1"/>
</dbReference>
<dbReference type="Gene3D" id="3.30.70.1660">
    <property type="match status" value="1"/>
</dbReference>
<dbReference type="Gene3D" id="6.10.140.1950">
    <property type="match status" value="1"/>
</dbReference>
<dbReference type="HAMAP" id="MF_00093">
    <property type="entry name" value="Rel_fac_1"/>
    <property type="match status" value="1"/>
</dbReference>
<dbReference type="InterPro" id="IPR005139">
    <property type="entry name" value="PCRF"/>
</dbReference>
<dbReference type="InterPro" id="IPR000352">
    <property type="entry name" value="Pep_chain_release_fac_I"/>
</dbReference>
<dbReference type="InterPro" id="IPR045853">
    <property type="entry name" value="Pep_chain_release_fac_I_sf"/>
</dbReference>
<dbReference type="InterPro" id="IPR050057">
    <property type="entry name" value="Prokaryotic/Mito_RF"/>
</dbReference>
<dbReference type="InterPro" id="IPR004373">
    <property type="entry name" value="RF-1"/>
</dbReference>
<dbReference type="NCBIfam" id="TIGR00019">
    <property type="entry name" value="prfA"/>
    <property type="match status" value="1"/>
</dbReference>
<dbReference type="NCBIfam" id="NF001859">
    <property type="entry name" value="PRK00591.1"/>
    <property type="match status" value="1"/>
</dbReference>
<dbReference type="PANTHER" id="PTHR43804">
    <property type="entry name" value="LD18447P"/>
    <property type="match status" value="1"/>
</dbReference>
<dbReference type="PANTHER" id="PTHR43804:SF7">
    <property type="entry name" value="LD18447P"/>
    <property type="match status" value="1"/>
</dbReference>
<dbReference type="Pfam" id="PF03462">
    <property type="entry name" value="PCRF"/>
    <property type="match status" value="1"/>
</dbReference>
<dbReference type="Pfam" id="PF00472">
    <property type="entry name" value="RF-1"/>
    <property type="match status" value="1"/>
</dbReference>
<dbReference type="SMART" id="SM00937">
    <property type="entry name" value="PCRF"/>
    <property type="match status" value="1"/>
</dbReference>
<dbReference type="SUPFAM" id="SSF75620">
    <property type="entry name" value="Release factor"/>
    <property type="match status" value="1"/>
</dbReference>
<dbReference type="PROSITE" id="PS00745">
    <property type="entry name" value="RF_PROK_I"/>
    <property type="match status" value="1"/>
</dbReference>